<reference key="1">
    <citation type="submission" date="2002-12" db="EMBL/GenBank/DDBJ databases">
        <title>Complete genome sequence of Vibrio vulnificus CMCP6.</title>
        <authorList>
            <person name="Rhee J.H."/>
            <person name="Kim S.Y."/>
            <person name="Chung S.S."/>
            <person name="Kim J.J."/>
            <person name="Moon Y.H."/>
            <person name="Jeong H."/>
            <person name="Choy H.E."/>
        </authorList>
    </citation>
    <scope>NUCLEOTIDE SEQUENCE [LARGE SCALE GENOMIC DNA]</scope>
    <source>
        <strain>CMCP6</strain>
    </source>
</reference>
<proteinExistence type="inferred from homology"/>
<feature type="chain" id="PRO_0000098872" description="Tryptophan synthase alpha chain">
    <location>
        <begin position="1"/>
        <end position="268"/>
    </location>
</feature>
<feature type="active site" description="Proton acceptor" evidence="1">
    <location>
        <position position="49"/>
    </location>
</feature>
<feature type="active site" description="Proton acceptor" evidence="1">
    <location>
        <position position="60"/>
    </location>
</feature>
<accession>Q8D8B1</accession>
<name>TRPA_VIBVU</name>
<evidence type="ECO:0000255" key="1">
    <source>
        <dbReference type="HAMAP-Rule" id="MF_00131"/>
    </source>
</evidence>
<comment type="function">
    <text evidence="1">The alpha subunit is responsible for the aldol cleavage of indoleglycerol phosphate to indole and glyceraldehyde 3-phosphate.</text>
</comment>
<comment type="catalytic activity">
    <reaction evidence="1">
        <text>(1S,2R)-1-C-(indol-3-yl)glycerol 3-phosphate + L-serine = D-glyceraldehyde 3-phosphate + L-tryptophan + H2O</text>
        <dbReference type="Rhea" id="RHEA:10532"/>
        <dbReference type="ChEBI" id="CHEBI:15377"/>
        <dbReference type="ChEBI" id="CHEBI:33384"/>
        <dbReference type="ChEBI" id="CHEBI:57912"/>
        <dbReference type="ChEBI" id="CHEBI:58866"/>
        <dbReference type="ChEBI" id="CHEBI:59776"/>
        <dbReference type="EC" id="4.2.1.20"/>
    </reaction>
</comment>
<comment type="pathway">
    <text evidence="1">Amino-acid biosynthesis; L-tryptophan biosynthesis; L-tryptophan from chorismate: step 5/5.</text>
</comment>
<comment type="subunit">
    <text evidence="1">Tetramer of two alpha and two beta chains.</text>
</comment>
<comment type="similarity">
    <text evidence="1">Belongs to the TrpA family.</text>
</comment>
<gene>
    <name evidence="1" type="primary">trpA</name>
    <name type="ordered locus">VV1_3069</name>
</gene>
<keyword id="KW-0028">Amino-acid biosynthesis</keyword>
<keyword id="KW-0057">Aromatic amino acid biosynthesis</keyword>
<keyword id="KW-0456">Lyase</keyword>
<keyword id="KW-0822">Tryptophan biosynthesis</keyword>
<sequence length="268" mass="28292">MDRYQATFERLAAQKQGAFVPFVTVCDPNPELSLKIMDTLVKAGADALELGIPFSDPLADGPTIQGANIRALDSGATPDICFDLIGQIRAKYPDLPIGLLMYANLVYSRGIENFYQRCAQAGIDSVLIADVPTNESAEFVAAAEKFGVHPIFIAPPTASDETLKQVSQLGGGYTYLLSRAGVTGAETKANMPVGDMLAKLEQFNAPPALLGFGISEPEQVKQAIDAGAAGAISGSAVVKIIESHLNEPDAMLTALANFVSNMKSATQK</sequence>
<protein>
    <recommendedName>
        <fullName evidence="1">Tryptophan synthase alpha chain</fullName>
        <ecNumber evidence="1">4.2.1.20</ecNumber>
    </recommendedName>
</protein>
<organism>
    <name type="scientific">Vibrio vulnificus (strain CMCP6)</name>
    <dbReference type="NCBI Taxonomy" id="216895"/>
    <lineage>
        <taxon>Bacteria</taxon>
        <taxon>Pseudomonadati</taxon>
        <taxon>Pseudomonadota</taxon>
        <taxon>Gammaproteobacteria</taxon>
        <taxon>Vibrionales</taxon>
        <taxon>Vibrionaceae</taxon>
        <taxon>Vibrio</taxon>
    </lineage>
</organism>
<dbReference type="EC" id="4.2.1.20" evidence="1"/>
<dbReference type="EMBL" id="AE016795">
    <property type="protein sequence ID" value="AAO11393.1"/>
    <property type="molecule type" value="Genomic_DNA"/>
</dbReference>
<dbReference type="RefSeq" id="WP_011080872.1">
    <property type="nucleotide sequence ID" value="NC_004459.3"/>
</dbReference>
<dbReference type="SMR" id="Q8D8B1"/>
<dbReference type="KEGG" id="vvu:VV1_3069"/>
<dbReference type="HOGENOM" id="CLU_016734_0_4_6"/>
<dbReference type="UniPathway" id="UPA00035">
    <property type="reaction ID" value="UER00044"/>
</dbReference>
<dbReference type="Proteomes" id="UP000002275">
    <property type="component" value="Chromosome 1"/>
</dbReference>
<dbReference type="GO" id="GO:0005829">
    <property type="term" value="C:cytosol"/>
    <property type="evidence" value="ECO:0007669"/>
    <property type="project" value="TreeGrafter"/>
</dbReference>
<dbReference type="GO" id="GO:0004834">
    <property type="term" value="F:tryptophan synthase activity"/>
    <property type="evidence" value="ECO:0007669"/>
    <property type="project" value="UniProtKB-UniRule"/>
</dbReference>
<dbReference type="CDD" id="cd04724">
    <property type="entry name" value="Tryptophan_synthase_alpha"/>
    <property type="match status" value="1"/>
</dbReference>
<dbReference type="FunFam" id="3.20.20.70:FF:000037">
    <property type="entry name" value="Tryptophan synthase alpha chain"/>
    <property type="match status" value="1"/>
</dbReference>
<dbReference type="Gene3D" id="3.20.20.70">
    <property type="entry name" value="Aldolase class I"/>
    <property type="match status" value="1"/>
</dbReference>
<dbReference type="HAMAP" id="MF_00131">
    <property type="entry name" value="Trp_synth_alpha"/>
    <property type="match status" value="1"/>
</dbReference>
<dbReference type="InterPro" id="IPR013785">
    <property type="entry name" value="Aldolase_TIM"/>
</dbReference>
<dbReference type="InterPro" id="IPR011060">
    <property type="entry name" value="RibuloseP-bd_barrel"/>
</dbReference>
<dbReference type="InterPro" id="IPR018204">
    <property type="entry name" value="Trp_synthase_alpha_AS"/>
</dbReference>
<dbReference type="InterPro" id="IPR002028">
    <property type="entry name" value="Trp_synthase_suA"/>
</dbReference>
<dbReference type="NCBIfam" id="TIGR00262">
    <property type="entry name" value="trpA"/>
    <property type="match status" value="1"/>
</dbReference>
<dbReference type="PANTHER" id="PTHR43406:SF1">
    <property type="entry name" value="TRYPTOPHAN SYNTHASE ALPHA CHAIN, CHLOROPLASTIC"/>
    <property type="match status" value="1"/>
</dbReference>
<dbReference type="PANTHER" id="PTHR43406">
    <property type="entry name" value="TRYPTOPHAN SYNTHASE, ALPHA CHAIN"/>
    <property type="match status" value="1"/>
</dbReference>
<dbReference type="Pfam" id="PF00290">
    <property type="entry name" value="Trp_syntA"/>
    <property type="match status" value="1"/>
</dbReference>
<dbReference type="SUPFAM" id="SSF51366">
    <property type="entry name" value="Ribulose-phoshate binding barrel"/>
    <property type="match status" value="1"/>
</dbReference>
<dbReference type="PROSITE" id="PS00167">
    <property type="entry name" value="TRP_SYNTHASE_ALPHA"/>
    <property type="match status" value="1"/>
</dbReference>